<dbReference type="EC" id="4.1.1.31" evidence="1"/>
<dbReference type="EMBL" id="CP000050">
    <property type="protein sequence ID" value="AAY50523.1"/>
    <property type="molecule type" value="Genomic_DNA"/>
</dbReference>
<dbReference type="RefSeq" id="WP_011270001.1">
    <property type="nucleotide sequence ID" value="NZ_CP155948.1"/>
</dbReference>
<dbReference type="SMR" id="Q4UR00"/>
<dbReference type="KEGG" id="xcb:XC_3479"/>
<dbReference type="HOGENOM" id="CLU_006557_2_0_6"/>
<dbReference type="Proteomes" id="UP000000420">
    <property type="component" value="Chromosome"/>
</dbReference>
<dbReference type="GO" id="GO:0005829">
    <property type="term" value="C:cytosol"/>
    <property type="evidence" value="ECO:0007669"/>
    <property type="project" value="TreeGrafter"/>
</dbReference>
<dbReference type="GO" id="GO:0000287">
    <property type="term" value="F:magnesium ion binding"/>
    <property type="evidence" value="ECO:0007669"/>
    <property type="project" value="UniProtKB-UniRule"/>
</dbReference>
<dbReference type="GO" id="GO:0008964">
    <property type="term" value="F:phosphoenolpyruvate carboxylase activity"/>
    <property type="evidence" value="ECO:0007669"/>
    <property type="project" value="UniProtKB-UniRule"/>
</dbReference>
<dbReference type="GO" id="GO:0015977">
    <property type="term" value="P:carbon fixation"/>
    <property type="evidence" value="ECO:0007669"/>
    <property type="project" value="UniProtKB-UniRule"/>
</dbReference>
<dbReference type="GO" id="GO:0006107">
    <property type="term" value="P:oxaloacetate metabolic process"/>
    <property type="evidence" value="ECO:0007669"/>
    <property type="project" value="UniProtKB-UniRule"/>
</dbReference>
<dbReference type="GO" id="GO:0006099">
    <property type="term" value="P:tricarboxylic acid cycle"/>
    <property type="evidence" value="ECO:0007669"/>
    <property type="project" value="InterPro"/>
</dbReference>
<dbReference type="FunFam" id="1.20.1440.90:FF:000004">
    <property type="entry name" value="Phosphoenolpyruvate carboxylase"/>
    <property type="match status" value="1"/>
</dbReference>
<dbReference type="Gene3D" id="1.20.1440.90">
    <property type="entry name" value="Phosphoenolpyruvate/pyruvate domain"/>
    <property type="match status" value="1"/>
</dbReference>
<dbReference type="HAMAP" id="MF_00595">
    <property type="entry name" value="PEPcase_type1"/>
    <property type="match status" value="1"/>
</dbReference>
<dbReference type="InterPro" id="IPR021135">
    <property type="entry name" value="PEP_COase"/>
</dbReference>
<dbReference type="InterPro" id="IPR022805">
    <property type="entry name" value="PEP_COase_bac/pln-type"/>
</dbReference>
<dbReference type="InterPro" id="IPR018129">
    <property type="entry name" value="PEP_COase_Lys_AS"/>
</dbReference>
<dbReference type="InterPro" id="IPR033129">
    <property type="entry name" value="PEPCASE_His_AS"/>
</dbReference>
<dbReference type="InterPro" id="IPR015813">
    <property type="entry name" value="Pyrv/PenolPyrv_kinase-like_dom"/>
</dbReference>
<dbReference type="NCBIfam" id="NF000584">
    <property type="entry name" value="PRK00009.1"/>
    <property type="match status" value="1"/>
</dbReference>
<dbReference type="PANTHER" id="PTHR30523">
    <property type="entry name" value="PHOSPHOENOLPYRUVATE CARBOXYLASE"/>
    <property type="match status" value="1"/>
</dbReference>
<dbReference type="PANTHER" id="PTHR30523:SF6">
    <property type="entry name" value="PHOSPHOENOLPYRUVATE CARBOXYLASE"/>
    <property type="match status" value="1"/>
</dbReference>
<dbReference type="Pfam" id="PF00311">
    <property type="entry name" value="PEPcase"/>
    <property type="match status" value="1"/>
</dbReference>
<dbReference type="PRINTS" id="PR00150">
    <property type="entry name" value="PEPCARBXLASE"/>
</dbReference>
<dbReference type="SUPFAM" id="SSF51621">
    <property type="entry name" value="Phosphoenolpyruvate/pyruvate domain"/>
    <property type="match status" value="1"/>
</dbReference>
<dbReference type="PROSITE" id="PS00781">
    <property type="entry name" value="PEPCASE_1"/>
    <property type="match status" value="1"/>
</dbReference>
<dbReference type="PROSITE" id="PS00393">
    <property type="entry name" value="PEPCASE_2"/>
    <property type="match status" value="1"/>
</dbReference>
<comment type="function">
    <text evidence="1">Forms oxaloacetate, a four-carbon dicarboxylic acid source for the tricarboxylic acid cycle.</text>
</comment>
<comment type="catalytic activity">
    <reaction evidence="1">
        <text>oxaloacetate + phosphate = phosphoenolpyruvate + hydrogencarbonate</text>
        <dbReference type="Rhea" id="RHEA:28370"/>
        <dbReference type="ChEBI" id="CHEBI:16452"/>
        <dbReference type="ChEBI" id="CHEBI:17544"/>
        <dbReference type="ChEBI" id="CHEBI:43474"/>
        <dbReference type="ChEBI" id="CHEBI:58702"/>
        <dbReference type="EC" id="4.1.1.31"/>
    </reaction>
</comment>
<comment type="cofactor">
    <cofactor evidence="1">
        <name>Mg(2+)</name>
        <dbReference type="ChEBI" id="CHEBI:18420"/>
    </cofactor>
</comment>
<comment type="similarity">
    <text evidence="1">Belongs to the PEPCase type 1 family.</text>
</comment>
<protein>
    <recommendedName>
        <fullName evidence="1">Phosphoenolpyruvate carboxylase</fullName>
        <shortName evidence="1">PEPC</shortName>
        <shortName evidence="1">PEPCase</shortName>
        <ecNumber evidence="1">4.1.1.31</ecNumber>
    </recommendedName>
</protein>
<keyword id="KW-0120">Carbon dioxide fixation</keyword>
<keyword id="KW-0456">Lyase</keyword>
<keyword id="KW-0460">Magnesium</keyword>
<accession>Q4UR00</accession>
<reference key="1">
    <citation type="journal article" date="2005" name="Genome Res.">
        <title>Comparative and functional genomic analyses of the pathogenicity of phytopathogen Xanthomonas campestris pv. campestris.</title>
        <authorList>
            <person name="Qian W."/>
            <person name="Jia Y."/>
            <person name="Ren S.-X."/>
            <person name="He Y.-Q."/>
            <person name="Feng J.-X."/>
            <person name="Lu L.-F."/>
            <person name="Sun Q."/>
            <person name="Ying G."/>
            <person name="Tang D.-J."/>
            <person name="Tang H."/>
            <person name="Wu W."/>
            <person name="Hao P."/>
            <person name="Wang L."/>
            <person name="Jiang B.-L."/>
            <person name="Zeng S."/>
            <person name="Gu W.-Y."/>
            <person name="Lu G."/>
            <person name="Rong L."/>
            <person name="Tian Y."/>
            <person name="Yao Z."/>
            <person name="Fu G."/>
            <person name="Chen B."/>
            <person name="Fang R."/>
            <person name="Qiang B."/>
            <person name="Chen Z."/>
            <person name="Zhao G.-P."/>
            <person name="Tang J.-L."/>
            <person name="He C."/>
        </authorList>
    </citation>
    <scope>NUCLEOTIDE SEQUENCE [LARGE SCALE GENOMIC DNA]</scope>
    <source>
        <strain>8004</strain>
    </source>
</reference>
<evidence type="ECO:0000255" key="1">
    <source>
        <dbReference type="HAMAP-Rule" id="MF_00595"/>
    </source>
</evidence>
<feature type="chain" id="PRO_1000025602" description="Phosphoenolpyruvate carboxylase">
    <location>
        <begin position="1"/>
        <end position="904"/>
    </location>
</feature>
<feature type="active site" evidence="1">
    <location>
        <position position="151"/>
    </location>
</feature>
<feature type="active site" evidence="1">
    <location>
        <position position="570"/>
    </location>
</feature>
<sequence length="904" mass="100117">MNEYRSSLVFATPDVPLRDDVRRLGALVGDLLAEQVSADFLEEIERIRTTAIARRESDTPPAGLLSLLEGREPRAAEALVRAFSTYFQVVNIAERVHRIRRRRDYQRSGTDTPQPEGLHDALRRLKAQGVTLDELSEWLPRIDVEPVFTAHPTEAVRRALLEKEQLMVASLVDNLDGMRTPNERATDAARFRMALTASWQTADSSPVRPTVEDEREHVGFYLTQVLYRVIPVMYETLEHAIEETYGSTLALPRLLRFGTWVGGDMDGNPNVDAHTIAGTLDAQRRAVLDRYLNELWQLASLLSQSTTLVAVSPALSAQLERYQALLPDAAARSRPRHGDMPYRLLNDLMRARLQATLDDADGAYAAPAELEHDLQLILDSLQANKGLHAGWFAVRRLLWRVRSFGFHLARLDVRQESSVHARAVADALGQADWDSQDATHRAGLLGPYASGEQALPQVDDEGNARLDAVFAALADARTRHGADALGSYIISMAHNRADVLTVLALARRGGLVDDAGAVPLDIVPLFETVDDLRGGTGTVQDLLADPVYRQHLRARGDTQMVMLGYSDSGKDGGIAASRWGLQRAQVELLEAAAELGVRLTFFHGRGGSIVRGGGKTTRALDAAPRGSVDGRLRVTEQGEVIHRKYGIRALALRSLEQMTGAVLLSSLRPRAPEPREDAWRPVMDLVAERSTVAYRGFVGAPDFMQYFRLATPIDVIERMTLGSRPSRRLGQDAALSNLRAIPWVFAWSQARAVIPGWYGVGSGLQAAVEAGHEDSLREMAQDWPFFRTFLDDIAMVLSKGDLNIAELFSRLAGPLHARFFPRIRDELALTKHWVKTLLGQRSLLQHDPRLALSIRLRNPYIDPISVLQVDLLQRWRATDGEDEELLRALVACVNGVAQGVQNTG</sequence>
<proteinExistence type="inferred from homology"/>
<organism>
    <name type="scientific">Xanthomonas campestris pv. campestris (strain 8004)</name>
    <dbReference type="NCBI Taxonomy" id="314565"/>
    <lineage>
        <taxon>Bacteria</taxon>
        <taxon>Pseudomonadati</taxon>
        <taxon>Pseudomonadota</taxon>
        <taxon>Gammaproteobacteria</taxon>
        <taxon>Lysobacterales</taxon>
        <taxon>Lysobacteraceae</taxon>
        <taxon>Xanthomonas</taxon>
    </lineage>
</organism>
<gene>
    <name evidence="1" type="primary">ppc</name>
    <name type="ordered locus">XC_3479</name>
</gene>
<name>CAPP_XANC8</name>